<organism>
    <name type="scientific">Escherichia coli (strain K12)</name>
    <dbReference type="NCBI Taxonomy" id="83333"/>
    <lineage>
        <taxon>Bacteria</taxon>
        <taxon>Pseudomonadati</taxon>
        <taxon>Pseudomonadota</taxon>
        <taxon>Gammaproteobacteria</taxon>
        <taxon>Enterobacterales</taxon>
        <taxon>Enterobacteriaceae</taxon>
        <taxon>Escherichia</taxon>
    </lineage>
</organism>
<feature type="chain" id="PRO_0000105613" description="HTH-type transcriptional regulator CysB">
    <location>
        <begin position="1"/>
        <end position="324"/>
    </location>
</feature>
<feature type="domain" description="HTH lysR-type" evidence="2">
    <location>
        <begin position="1"/>
        <end position="59"/>
    </location>
</feature>
<feature type="DNA-binding region" description="H-T-H motif" evidence="2">
    <location>
        <begin position="19"/>
        <end position="38"/>
    </location>
</feature>
<dbReference type="EMBL" id="M15041">
    <property type="protein sequence ID" value="AAA23642.1"/>
    <property type="molecule type" value="Genomic_DNA"/>
</dbReference>
<dbReference type="EMBL" id="M34332">
    <property type="protein sequence ID" value="AAA23643.1"/>
    <property type="molecule type" value="Genomic_DNA"/>
</dbReference>
<dbReference type="EMBL" id="U00096">
    <property type="protein sequence ID" value="AAC74357.1"/>
    <property type="molecule type" value="Genomic_DNA"/>
</dbReference>
<dbReference type="EMBL" id="AP009048">
    <property type="protein sequence ID" value="BAA14827.1"/>
    <property type="molecule type" value="Genomic_DNA"/>
</dbReference>
<dbReference type="EMBL" id="X60293">
    <property type="protein sequence ID" value="CAA42833.1"/>
    <property type="molecule type" value="Genomic_DNA"/>
</dbReference>
<dbReference type="PIR" id="A26695">
    <property type="entry name" value="RGECCB"/>
</dbReference>
<dbReference type="RefSeq" id="NP_415791.1">
    <property type="nucleotide sequence ID" value="NC_000913.3"/>
</dbReference>
<dbReference type="RefSeq" id="WP_000776253.1">
    <property type="nucleotide sequence ID" value="NZ_STEB01000005.1"/>
</dbReference>
<dbReference type="SMR" id="P0A9F3"/>
<dbReference type="BioGRID" id="4260138">
    <property type="interactions" value="115"/>
</dbReference>
<dbReference type="BioGRID" id="850138">
    <property type="interactions" value="3"/>
</dbReference>
<dbReference type="DIP" id="DIP-36048N"/>
<dbReference type="FunCoup" id="P0A9F3">
    <property type="interactions" value="169"/>
</dbReference>
<dbReference type="IntAct" id="P0A9F3">
    <property type="interactions" value="10"/>
</dbReference>
<dbReference type="STRING" id="511145.b1275"/>
<dbReference type="jPOST" id="P0A9F3"/>
<dbReference type="PaxDb" id="511145-b1275"/>
<dbReference type="EnsemblBacteria" id="AAC74357">
    <property type="protein sequence ID" value="AAC74357"/>
    <property type="gene ID" value="b1275"/>
</dbReference>
<dbReference type="GeneID" id="93775394"/>
<dbReference type="GeneID" id="945771"/>
<dbReference type="KEGG" id="ecj:JW1267"/>
<dbReference type="KEGG" id="eco:b1275"/>
<dbReference type="KEGG" id="ecoc:C3026_07475"/>
<dbReference type="PATRIC" id="fig|1411691.4.peg.1009"/>
<dbReference type="EchoBASE" id="EB0181"/>
<dbReference type="eggNOG" id="COG0583">
    <property type="taxonomic scope" value="Bacteria"/>
</dbReference>
<dbReference type="HOGENOM" id="CLU_039613_6_2_6"/>
<dbReference type="InParanoid" id="P0A9F3"/>
<dbReference type="OMA" id="PVLQKFC"/>
<dbReference type="OrthoDB" id="5297026at2"/>
<dbReference type="PhylomeDB" id="P0A9F3"/>
<dbReference type="BioCyc" id="EcoCyc:PD00232"/>
<dbReference type="BioCyc" id="MetaCyc:PD00232"/>
<dbReference type="PRO" id="PR:P0A9F3"/>
<dbReference type="Proteomes" id="UP000000625">
    <property type="component" value="Chromosome"/>
</dbReference>
<dbReference type="GO" id="GO:0005829">
    <property type="term" value="C:cytosol"/>
    <property type="evidence" value="ECO:0000314"/>
    <property type="project" value="EcoCyc"/>
</dbReference>
<dbReference type="GO" id="GO:0003677">
    <property type="term" value="F:DNA binding"/>
    <property type="evidence" value="ECO:0000314"/>
    <property type="project" value="EcoCyc"/>
</dbReference>
<dbReference type="GO" id="GO:0003700">
    <property type="term" value="F:DNA-binding transcription factor activity"/>
    <property type="evidence" value="ECO:0007669"/>
    <property type="project" value="InterPro"/>
</dbReference>
<dbReference type="GO" id="GO:0042802">
    <property type="term" value="F:identical protein binding"/>
    <property type="evidence" value="ECO:0000315"/>
    <property type="project" value="EcoCyc"/>
</dbReference>
<dbReference type="GO" id="GO:0000976">
    <property type="term" value="F:transcription cis-regulatory region binding"/>
    <property type="evidence" value="ECO:0000318"/>
    <property type="project" value="GO_Central"/>
</dbReference>
<dbReference type="GO" id="GO:0019344">
    <property type="term" value="P:cysteine biosynthetic process"/>
    <property type="evidence" value="ECO:0000318"/>
    <property type="project" value="GO_Central"/>
</dbReference>
<dbReference type="GO" id="GO:0006351">
    <property type="term" value="P:DNA-templated transcription"/>
    <property type="evidence" value="ECO:0000269"/>
    <property type="project" value="EcoCyc"/>
</dbReference>
<dbReference type="GO" id="GO:0006355">
    <property type="term" value="P:regulation of DNA-templated transcription"/>
    <property type="evidence" value="ECO:0000318"/>
    <property type="project" value="GO_Central"/>
</dbReference>
<dbReference type="GO" id="GO:0010165">
    <property type="term" value="P:response to X-ray"/>
    <property type="evidence" value="ECO:0000315"/>
    <property type="project" value="EcoCyc"/>
</dbReference>
<dbReference type="CDD" id="cd08443">
    <property type="entry name" value="PBP2_CysB"/>
    <property type="match status" value="1"/>
</dbReference>
<dbReference type="FunFam" id="1.10.10.10:FF:000021">
    <property type="entry name" value="HTH-type transcriptional regulator CysB"/>
    <property type="match status" value="1"/>
</dbReference>
<dbReference type="FunFam" id="3.40.190.10:FF:000037">
    <property type="entry name" value="HTH-type transcriptional regulator CysB"/>
    <property type="match status" value="1"/>
</dbReference>
<dbReference type="Gene3D" id="3.40.190.10">
    <property type="entry name" value="Periplasmic binding protein-like II"/>
    <property type="match status" value="2"/>
</dbReference>
<dbReference type="Gene3D" id="1.10.10.10">
    <property type="entry name" value="Winged helix-like DNA-binding domain superfamily/Winged helix DNA-binding domain"/>
    <property type="match status" value="1"/>
</dbReference>
<dbReference type="InterPro" id="IPR005119">
    <property type="entry name" value="LysR_subst-bd"/>
</dbReference>
<dbReference type="InterPro" id="IPR000847">
    <property type="entry name" value="Tscrpt_reg_HTH_LysR"/>
</dbReference>
<dbReference type="InterPro" id="IPR036388">
    <property type="entry name" value="WH-like_DNA-bd_sf"/>
</dbReference>
<dbReference type="InterPro" id="IPR036390">
    <property type="entry name" value="WH_DNA-bd_sf"/>
</dbReference>
<dbReference type="NCBIfam" id="NF009326">
    <property type="entry name" value="PRK12681.1"/>
    <property type="match status" value="1"/>
</dbReference>
<dbReference type="NCBIfam" id="NF009327">
    <property type="entry name" value="PRK12684.1"/>
    <property type="match status" value="1"/>
</dbReference>
<dbReference type="PANTHER" id="PTHR30126">
    <property type="entry name" value="HTH-TYPE TRANSCRIPTIONAL REGULATOR"/>
    <property type="match status" value="1"/>
</dbReference>
<dbReference type="PANTHER" id="PTHR30126:SF6">
    <property type="entry name" value="HTH-TYPE TRANSCRIPTIONAL REGULATOR CYSB-RELATED"/>
    <property type="match status" value="1"/>
</dbReference>
<dbReference type="Pfam" id="PF00126">
    <property type="entry name" value="HTH_1"/>
    <property type="match status" value="1"/>
</dbReference>
<dbReference type="Pfam" id="PF03466">
    <property type="entry name" value="LysR_substrate"/>
    <property type="match status" value="1"/>
</dbReference>
<dbReference type="PRINTS" id="PR00039">
    <property type="entry name" value="HTHLYSR"/>
</dbReference>
<dbReference type="SUPFAM" id="SSF53850">
    <property type="entry name" value="Periplasmic binding protein-like II"/>
    <property type="match status" value="1"/>
</dbReference>
<dbReference type="SUPFAM" id="SSF46785">
    <property type="entry name" value="Winged helix' DNA-binding domain"/>
    <property type="match status" value="1"/>
</dbReference>
<dbReference type="PROSITE" id="PS50931">
    <property type="entry name" value="HTH_LYSR"/>
    <property type="match status" value="1"/>
</dbReference>
<accession>P0A9F3</accession>
<accession>P06613</accession>
<accession>P76834</accession>
<name>CYSB_ECOLI</name>
<protein>
    <recommendedName>
        <fullName>HTH-type transcriptional regulator CysB</fullName>
    </recommendedName>
    <alternativeName>
        <fullName>Cys regulon transcriptional activator</fullName>
    </alternativeName>
</protein>
<gene>
    <name type="primary">cysB</name>
    <name type="ordered locus">b1275</name>
    <name type="ordered locus">JW1267</name>
</gene>
<sequence>MKLQQLRYIVEVVNHNLNVSSTAEGLYTSQPGISKQVRMLEDELGIQIFSRSGKHLTQVTPAGQEIIRIAREVLSKVDAIKSVAGEHTWPDKGSLYIATTHTQARYALPNVIKGFIERYPRVSLHMHQGSPTQIADAVSKGNADFAIATEALHLYEDLVMLPCYHWNRAIVVTPDHPLAGKKAITIEELAQYPLVTYTFGFTGRSELDTAFNRAGLTPRIVFTATDADVIKTYVRLGLGVGVIASMAVDPVADPDLVRVDAHDIFSHSTTKIGFRRSTFLRSYMYDFIQRFAPHLTRDVVDAAVALRSNEEIEVMFKDIKLPEK</sequence>
<comment type="function">
    <text>This protein is a positive regulator of gene expression for the cysteine regulon, a system of 10 or more loci involved in the biosynthesis of L-cysteine from inorganic sulfate. The inducer for CysB is N-acetylserine. CysB inhibits its own transcription.</text>
</comment>
<comment type="subunit">
    <text evidence="1">Homotetramer.</text>
</comment>
<comment type="subcellular location">
    <subcellularLocation>
        <location>Cytoplasm</location>
    </subcellularLocation>
</comment>
<comment type="similarity">
    <text evidence="3">Belongs to the LysR transcriptional regulatory family.</text>
</comment>
<proteinExistence type="inferred from homology"/>
<keyword id="KW-0010">Activator</keyword>
<keyword id="KW-0028">Amino-acid biosynthesis</keyword>
<keyword id="KW-0198">Cysteine biosynthesis</keyword>
<keyword id="KW-0963">Cytoplasm</keyword>
<keyword id="KW-0238">DNA-binding</keyword>
<keyword id="KW-1185">Reference proteome</keyword>
<keyword id="KW-0804">Transcription</keyword>
<keyword id="KW-0805">Transcription regulation</keyword>
<evidence type="ECO:0000250" key="1"/>
<evidence type="ECO:0000255" key="2">
    <source>
        <dbReference type="PROSITE-ProRule" id="PRU00253"/>
    </source>
</evidence>
<evidence type="ECO:0000305" key="3"/>
<reference key="1">
    <citation type="journal article" date="1987" name="J. Biol. Chem.">
        <title>DNA sequences of the cysB regions of Salmonella typhimurium and Escherichia coli.</title>
        <authorList>
            <person name="Ostrowski J."/>
            <person name="Jagura-Burdzy G."/>
            <person name="Kredich N.M."/>
        </authorList>
    </citation>
    <scope>NUCLEOTIDE SEQUENCE [GENOMIC DNA]</scope>
</reference>
<reference key="2">
    <citation type="journal article" date="1990" name="Biochem. Biophys. Res. Commun.">
        <title>Analysis of the Escherichia coli K-12 cysB gene and its product using the method of gene fusion.</title>
        <authorList>
            <person name="Tei H."/>
            <person name="Watanabe K."/>
            <person name="Murata K."/>
            <person name="Kimura A."/>
        </authorList>
    </citation>
    <scope>NUCLEOTIDE SEQUENCE [GENOMIC DNA]</scope>
    <source>
        <strain>K12</strain>
    </source>
</reference>
<reference key="3">
    <citation type="journal article" date="1996" name="DNA Res.">
        <title>A 570-kb DNA sequence of the Escherichia coli K-12 genome corresponding to the 28.0-40.1 min region on the linkage map.</title>
        <authorList>
            <person name="Aiba H."/>
            <person name="Baba T."/>
            <person name="Fujita K."/>
            <person name="Hayashi K."/>
            <person name="Inada T."/>
            <person name="Isono K."/>
            <person name="Itoh T."/>
            <person name="Kasai H."/>
            <person name="Kashimoto K."/>
            <person name="Kimura S."/>
            <person name="Kitakawa M."/>
            <person name="Kitagawa M."/>
            <person name="Makino K."/>
            <person name="Miki T."/>
            <person name="Mizobuchi K."/>
            <person name="Mori H."/>
            <person name="Mori T."/>
            <person name="Motomura K."/>
            <person name="Nakade S."/>
            <person name="Nakamura Y."/>
            <person name="Nashimoto H."/>
            <person name="Nishio Y."/>
            <person name="Oshima T."/>
            <person name="Saito N."/>
            <person name="Sampei G."/>
            <person name="Seki Y."/>
            <person name="Sivasundaram S."/>
            <person name="Tagami H."/>
            <person name="Takeda J."/>
            <person name="Takemoto K."/>
            <person name="Takeuchi Y."/>
            <person name="Wada C."/>
            <person name="Yamamoto Y."/>
            <person name="Horiuchi T."/>
        </authorList>
    </citation>
    <scope>NUCLEOTIDE SEQUENCE [LARGE SCALE GENOMIC DNA]</scope>
    <source>
        <strain>K12 / W3110 / ATCC 27325 / DSM 5911</strain>
    </source>
</reference>
<reference key="4">
    <citation type="journal article" date="1997" name="Science">
        <title>The complete genome sequence of Escherichia coli K-12.</title>
        <authorList>
            <person name="Blattner F.R."/>
            <person name="Plunkett G. III"/>
            <person name="Bloch C.A."/>
            <person name="Perna N.T."/>
            <person name="Burland V."/>
            <person name="Riley M."/>
            <person name="Collado-Vides J."/>
            <person name="Glasner J.D."/>
            <person name="Rode C.K."/>
            <person name="Mayhew G.F."/>
            <person name="Gregor J."/>
            <person name="Davis N.W."/>
            <person name="Kirkpatrick H.A."/>
            <person name="Goeden M.A."/>
            <person name="Rose D.J."/>
            <person name="Mau B."/>
            <person name="Shao Y."/>
        </authorList>
    </citation>
    <scope>NUCLEOTIDE SEQUENCE [LARGE SCALE GENOMIC DNA]</scope>
    <source>
        <strain>K12 / MG1655 / ATCC 47076</strain>
    </source>
</reference>
<reference key="5">
    <citation type="journal article" date="2006" name="Mol. Syst. Biol.">
        <title>Highly accurate genome sequences of Escherichia coli K-12 strains MG1655 and W3110.</title>
        <authorList>
            <person name="Hayashi K."/>
            <person name="Morooka N."/>
            <person name="Yamamoto Y."/>
            <person name="Fujita K."/>
            <person name="Isono K."/>
            <person name="Choi S."/>
            <person name="Ohtsubo E."/>
            <person name="Baba T."/>
            <person name="Wanner B.L."/>
            <person name="Mori H."/>
            <person name="Horiuchi T."/>
        </authorList>
    </citation>
    <scope>NUCLEOTIDE SEQUENCE [LARGE SCALE GENOMIC DNA]</scope>
    <source>
        <strain>K12 / W3110 / ATCC 27325 / DSM 5911</strain>
    </source>
</reference>
<reference key="6">
    <citation type="journal article" date="1992" name="Eur. J. Biochem.">
        <title>The aconitase of Escherichia coli. Nucleotide sequence of the aconitase gene and amino acid sequence similarity with mitochondrial aconitases, the iron-responsive-element-binding protein and isopropylmalate isomerases.</title>
        <authorList>
            <person name="Prodromou C."/>
            <person name="Artymiuk P.J."/>
            <person name="Guest J.R."/>
        </authorList>
    </citation>
    <scope>NUCLEOTIDE SEQUENCE [GENOMIC DNA] OF 249-324</scope>
</reference>